<gene>
    <name evidence="1" type="primary">srp54</name>
    <name type="ordered locus">TV1022</name>
    <name type="ORF">TVG1046103</name>
</gene>
<comment type="function">
    <text evidence="1">Involved in targeting and insertion of nascent membrane proteins into the cytoplasmic membrane. Binds to the hydrophobic signal sequence of the ribosome-nascent chain (RNC) as it emerges from the ribosomes. The SRP-RNC complex is then targeted to the cytoplasmic membrane where it interacts with the SRP receptor FtsY.</text>
</comment>
<comment type="catalytic activity">
    <reaction evidence="1">
        <text>GTP + H2O = GDP + phosphate + H(+)</text>
        <dbReference type="Rhea" id="RHEA:19669"/>
        <dbReference type="ChEBI" id="CHEBI:15377"/>
        <dbReference type="ChEBI" id="CHEBI:15378"/>
        <dbReference type="ChEBI" id="CHEBI:37565"/>
        <dbReference type="ChEBI" id="CHEBI:43474"/>
        <dbReference type="ChEBI" id="CHEBI:58189"/>
        <dbReference type="EC" id="3.6.5.4"/>
    </reaction>
</comment>
<comment type="subunit">
    <text evidence="1">Part of the signal recognition particle protein translocation system, which is composed of SRP and FtsY. Archaeal SRP consists of a 7S RNA molecule of 300 nucleotides and two protein subunits: SRP54 and SRP19.</text>
</comment>
<comment type="subcellular location">
    <subcellularLocation>
        <location evidence="1">Cytoplasm</location>
    </subcellularLocation>
    <text evidence="1">The SRP-RNC complex is targeted to the cytoplasmic membrane.</text>
</comment>
<comment type="domain">
    <text evidence="1">Composed of three domains: the N-terminal N domain, which is responsible for interactions with the ribosome, the central G domain, which binds GTP, and the C-terminal M domain, which binds the RNA and the signal sequence of the RNC.</text>
</comment>
<comment type="similarity">
    <text evidence="1">Belongs to the GTP-binding SRP family. SRP54 subfamily.</text>
</comment>
<evidence type="ECO:0000255" key="1">
    <source>
        <dbReference type="HAMAP-Rule" id="MF_00306"/>
    </source>
</evidence>
<proteinExistence type="inferred from homology"/>
<protein>
    <recommendedName>
        <fullName evidence="1">Signal recognition particle 54 kDa protein</fullName>
        <shortName evidence="1">SRP54</shortName>
        <ecNumber evidence="1">3.6.5.4</ecNumber>
    </recommendedName>
</protein>
<keyword id="KW-0963">Cytoplasm</keyword>
<keyword id="KW-0342">GTP-binding</keyword>
<keyword id="KW-0378">Hydrolase</keyword>
<keyword id="KW-0547">Nucleotide-binding</keyword>
<keyword id="KW-0687">Ribonucleoprotein</keyword>
<keyword id="KW-0694">RNA-binding</keyword>
<keyword id="KW-0733">Signal recognition particle</keyword>
<dbReference type="EC" id="3.6.5.4" evidence="1"/>
<dbReference type="EMBL" id="BA000011">
    <property type="protein sequence ID" value="BAB60164.1"/>
    <property type="molecule type" value="Genomic_DNA"/>
</dbReference>
<dbReference type="RefSeq" id="WP_010917250.1">
    <property type="nucleotide sequence ID" value="NC_002689.2"/>
</dbReference>
<dbReference type="SMR" id="Q979Y8"/>
<dbReference type="STRING" id="273116.gene:9381815"/>
<dbReference type="PaxDb" id="273116-14325260"/>
<dbReference type="GeneID" id="1441132"/>
<dbReference type="KEGG" id="tvo:TVG1046103"/>
<dbReference type="eggNOG" id="arCOG01228">
    <property type="taxonomic scope" value="Archaea"/>
</dbReference>
<dbReference type="HOGENOM" id="CLU_009301_6_0_2"/>
<dbReference type="OrthoDB" id="52849at2157"/>
<dbReference type="PhylomeDB" id="Q979Y8"/>
<dbReference type="Proteomes" id="UP000001017">
    <property type="component" value="Chromosome"/>
</dbReference>
<dbReference type="GO" id="GO:0048500">
    <property type="term" value="C:signal recognition particle"/>
    <property type="evidence" value="ECO:0007669"/>
    <property type="project" value="UniProtKB-UniRule"/>
</dbReference>
<dbReference type="GO" id="GO:0008312">
    <property type="term" value="F:7S RNA binding"/>
    <property type="evidence" value="ECO:0007669"/>
    <property type="project" value="UniProtKB-UniRule"/>
</dbReference>
<dbReference type="GO" id="GO:0005525">
    <property type="term" value="F:GTP binding"/>
    <property type="evidence" value="ECO:0007669"/>
    <property type="project" value="UniProtKB-UniRule"/>
</dbReference>
<dbReference type="GO" id="GO:0003924">
    <property type="term" value="F:GTPase activity"/>
    <property type="evidence" value="ECO:0007669"/>
    <property type="project" value="UniProtKB-UniRule"/>
</dbReference>
<dbReference type="GO" id="GO:0006614">
    <property type="term" value="P:SRP-dependent cotranslational protein targeting to membrane"/>
    <property type="evidence" value="ECO:0007669"/>
    <property type="project" value="InterPro"/>
</dbReference>
<dbReference type="CDD" id="cd17875">
    <property type="entry name" value="SRP54_G"/>
    <property type="match status" value="1"/>
</dbReference>
<dbReference type="Gene3D" id="3.40.50.300">
    <property type="entry name" value="P-loop containing nucleotide triphosphate hydrolases"/>
    <property type="match status" value="1"/>
</dbReference>
<dbReference type="Gene3D" id="1.20.120.140">
    <property type="entry name" value="Signal recognition particle SRP54, nucleotide-binding domain"/>
    <property type="match status" value="1"/>
</dbReference>
<dbReference type="Gene3D" id="1.10.260.30">
    <property type="entry name" value="Signal recognition particle, SRP54 subunit, M-domain"/>
    <property type="match status" value="1"/>
</dbReference>
<dbReference type="HAMAP" id="MF_00306">
    <property type="entry name" value="SRP54"/>
    <property type="match status" value="1"/>
</dbReference>
<dbReference type="InterPro" id="IPR027417">
    <property type="entry name" value="P-loop_NTPase"/>
</dbReference>
<dbReference type="InterPro" id="IPR036891">
    <property type="entry name" value="Signal_recog_part_SRP54_M_sf"/>
</dbReference>
<dbReference type="InterPro" id="IPR013822">
    <property type="entry name" value="Signal_recog_particl_SRP54_hlx"/>
</dbReference>
<dbReference type="InterPro" id="IPR004125">
    <property type="entry name" value="Signal_recog_particle_SRP54_M"/>
</dbReference>
<dbReference type="InterPro" id="IPR036225">
    <property type="entry name" value="SRP/SRP_N"/>
</dbReference>
<dbReference type="InterPro" id="IPR022941">
    <property type="entry name" value="SRP54"/>
</dbReference>
<dbReference type="InterPro" id="IPR000897">
    <property type="entry name" value="SRP54_GTPase_dom"/>
</dbReference>
<dbReference type="InterPro" id="IPR042101">
    <property type="entry name" value="SRP54_N_sf"/>
</dbReference>
<dbReference type="PANTHER" id="PTHR11564">
    <property type="entry name" value="SIGNAL RECOGNITION PARTICLE 54K PROTEIN SRP54"/>
    <property type="match status" value="1"/>
</dbReference>
<dbReference type="PANTHER" id="PTHR11564:SF5">
    <property type="entry name" value="SIGNAL RECOGNITION PARTICLE SUBUNIT SRP54"/>
    <property type="match status" value="1"/>
</dbReference>
<dbReference type="Pfam" id="PF00448">
    <property type="entry name" value="SRP54"/>
    <property type="match status" value="1"/>
</dbReference>
<dbReference type="Pfam" id="PF02881">
    <property type="entry name" value="SRP54_N"/>
    <property type="match status" value="1"/>
</dbReference>
<dbReference type="Pfam" id="PF02978">
    <property type="entry name" value="SRP_SPB"/>
    <property type="match status" value="1"/>
</dbReference>
<dbReference type="SMART" id="SM00962">
    <property type="entry name" value="SRP54"/>
    <property type="match status" value="1"/>
</dbReference>
<dbReference type="SMART" id="SM00963">
    <property type="entry name" value="SRP54_N"/>
    <property type="match status" value="1"/>
</dbReference>
<dbReference type="SUPFAM" id="SSF47364">
    <property type="entry name" value="Domain of the SRP/SRP receptor G-proteins"/>
    <property type="match status" value="1"/>
</dbReference>
<dbReference type="SUPFAM" id="SSF52540">
    <property type="entry name" value="P-loop containing nucleoside triphosphate hydrolases"/>
    <property type="match status" value="1"/>
</dbReference>
<dbReference type="SUPFAM" id="SSF47446">
    <property type="entry name" value="Signal peptide-binding domain"/>
    <property type="match status" value="1"/>
</dbReference>
<dbReference type="PROSITE" id="PS00300">
    <property type="entry name" value="SRP54"/>
    <property type="match status" value="1"/>
</dbReference>
<name>SRP54_THEVO</name>
<sequence length="455" mass="51053">MVLESLSSSLRETIRKITGSTYIDKNTVKEISKDLQRILLKADVNVQTVLNITKEMERRALEEKPPVGMAHQDYMVKIIYEELLKILGEPSNVELKPQTIMLVGLYGHGKTTSAGKLSRFFMKKGLSAGLIAADVHRYAAYEQLQQIAESVNAKFYGDPKEKDPVKIIKNGLEVLKDAQVKIIDTSGRDSLDSDLIEEIRRIKEAVKPDQVLMVIDATMGQQAGPESKAINDAVGVTGIIITKMDGTAKGGGALSAVAKMRVPIYFIGTGEHMDDMEIFDPKKFLSRLLGLGDLETLFETVKEANITEEEAQKSFEKLMTGKFNLKDMYDVWEKFSRPGLMKKLVDSLPLAKLPGSQKINDDQILTAEQKLQRYRIIMDSMTFQELENPEIINAKRITRIARGAGVREEDVRMLLKEFKAMKNNMKLMKGNRGFKKILQSNFRSGNFGLDDLGLK</sequence>
<feature type="chain" id="PRO_0000101190" description="Signal recognition particle 54 kDa protein">
    <location>
        <begin position="1"/>
        <end position="455"/>
    </location>
</feature>
<feature type="binding site" evidence="1">
    <location>
        <begin position="104"/>
        <end position="111"/>
    </location>
    <ligand>
        <name>GTP</name>
        <dbReference type="ChEBI" id="CHEBI:37565"/>
    </ligand>
</feature>
<feature type="binding site" evidence="1">
    <location>
        <begin position="184"/>
        <end position="188"/>
    </location>
    <ligand>
        <name>GTP</name>
        <dbReference type="ChEBI" id="CHEBI:37565"/>
    </ligand>
</feature>
<feature type="binding site" evidence="1">
    <location>
        <begin position="242"/>
        <end position="245"/>
    </location>
    <ligand>
        <name>GTP</name>
        <dbReference type="ChEBI" id="CHEBI:37565"/>
    </ligand>
</feature>
<accession>Q979Y8</accession>
<reference key="1">
    <citation type="journal article" date="2000" name="Proc. Natl. Acad. Sci. U.S.A.">
        <title>Archaeal adaptation to higher temperatures revealed by genomic sequence of Thermoplasma volcanium.</title>
        <authorList>
            <person name="Kawashima T."/>
            <person name="Amano N."/>
            <person name="Koike H."/>
            <person name="Makino S."/>
            <person name="Higuchi S."/>
            <person name="Kawashima-Ohya Y."/>
            <person name="Watanabe K."/>
            <person name="Yamazaki M."/>
            <person name="Kanehori K."/>
            <person name="Kawamoto T."/>
            <person name="Nunoshiba T."/>
            <person name="Yamamoto Y."/>
            <person name="Aramaki H."/>
            <person name="Makino K."/>
            <person name="Suzuki M."/>
        </authorList>
    </citation>
    <scope>NUCLEOTIDE SEQUENCE [LARGE SCALE GENOMIC DNA]</scope>
    <source>
        <strain>ATCC 51530 / DSM 4299 / JCM 9571 / NBRC 15438 / GSS1</strain>
    </source>
</reference>
<organism>
    <name type="scientific">Thermoplasma volcanium (strain ATCC 51530 / DSM 4299 / JCM 9571 / NBRC 15438 / GSS1)</name>
    <dbReference type="NCBI Taxonomy" id="273116"/>
    <lineage>
        <taxon>Archaea</taxon>
        <taxon>Methanobacteriati</taxon>
        <taxon>Thermoplasmatota</taxon>
        <taxon>Thermoplasmata</taxon>
        <taxon>Thermoplasmatales</taxon>
        <taxon>Thermoplasmataceae</taxon>
        <taxon>Thermoplasma</taxon>
    </lineage>
</organism>